<gene>
    <name evidence="1" type="primary">prfC</name>
    <name type="ordered locus">MADE_1006380</name>
</gene>
<protein>
    <recommendedName>
        <fullName evidence="1">Peptide chain release factor 3</fullName>
        <shortName evidence="1">RF-3</shortName>
    </recommendedName>
</protein>
<proteinExistence type="inferred from homology"/>
<keyword id="KW-0963">Cytoplasm</keyword>
<keyword id="KW-0342">GTP-binding</keyword>
<keyword id="KW-0547">Nucleotide-binding</keyword>
<keyword id="KW-0648">Protein biosynthesis</keyword>
<reference key="1">
    <citation type="journal article" date="2008" name="ISME J.">
        <title>Comparative genomics of two ecotypes of the marine planktonic copiotroph Alteromonas macleodii suggests alternative lifestyles associated with different kinds of particulate organic matter.</title>
        <authorList>
            <person name="Ivars-Martinez E."/>
            <person name="Martin-Cuadrado A.-B."/>
            <person name="D'Auria G."/>
            <person name="Mira A."/>
            <person name="Ferriera S."/>
            <person name="Johnson J."/>
            <person name="Friedman R."/>
            <person name="Rodriguez-Valera F."/>
        </authorList>
    </citation>
    <scope>NUCLEOTIDE SEQUENCE [LARGE SCALE GENOMIC DNA]</scope>
    <source>
        <strain>DSM 17117 / CIP 110805 / LMG 28347 / Deep ecotype</strain>
    </source>
</reference>
<feature type="chain" id="PRO_1000092473" description="Peptide chain release factor 3">
    <location>
        <begin position="1"/>
        <end position="529"/>
    </location>
</feature>
<feature type="domain" description="tr-type G">
    <location>
        <begin position="11"/>
        <end position="280"/>
    </location>
</feature>
<feature type="binding site" evidence="1">
    <location>
        <begin position="20"/>
        <end position="27"/>
    </location>
    <ligand>
        <name>GTP</name>
        <dbReference type="ChEBI" id="CHEBI:37565"/>
    </ligand>
</feature>
<feature type="binding site" evidence="1">
    <location>
        <begin position="88"/>
        <end position="92"/>
    </location>
    <ligand>
        <name>GTP</name>
        <dbReference type="ChEBI" id="CHEBI:37565"/>
    </ligand>
</feature>
<feature type="binding site" evidence="1">
    <location>
        <begin position="142"/>
        <end position="145"/>
    </location>
    <ligand>
        <name>GTP</name>
        <dbReference type="ChEBI" id="CHEBI:37565"/>
    </ligand>
</feature>
<accession>B4RU35</accession>
<accession>F2G4W4</accession>
<dbReference type="EMBL" id="CP001103">
    <property type="protein sequence ID" value="AEA97418.1"/>
    <property type="molecule type" value="Genomic_DNA"/>
</dbReference>
<dbReference type="RefSeq" id="WP_012517760.1">
    <property type="nucleotide sequence ID" value="NC_011138.3"/>
</dbReference>
<dbReference type="SMR" id="B4RU35"/>
<dbReference type="KEGG" id="amc:MADE_1006380"/>
<dbReference type="HOGENOM" id="CLU_002794_2_1_6"/>
<dbReference type="Proteomes" id="UP000001870">
    <property type="component" value="Chromosome"/>
</dbReference>
<dbReference type="GO" id="GO:0005829">
    <property type="term" value="C:cytosol"/>
    <property type="evidence" value="ECO:0007669"/>
    <property type="project" value="TreeGrafter"/>
</dbReference>
<dbReference type="GO" id="GO:0005525">
    <property type="term" value="F:GTP binding"/>
    <property type="evidence" value="ECO:0007669"/>
    <property type="project" value="UniProtKB-UniRule"/>
</dbReference>
<dbReference type="GO" id="GO:0003924">
    <property type="term" value="F:GTPase activity"/>
    <property type="evidence" value="ECO:0007669"/>
    <property type="project" value="InterPro"/>
</dbReference>
<dbReference type="GO" id="GO:0097216">
    <property type="term" value="F:guanosine tetraphosphate binding"/>
    <property type="evidence" value="ECO:0007669"/>
    <property type="project" value="UniProtKB-ARBA"/>
</dbReference>
<dbReference type="GO" id="GO:0016150">
    <property type="term" value="F:translation release factor activity, codon nonspecific"/>
    <property type="evidence" value="ECO:0007669"/>
    <property type="project" value="TreeGrafter"/>
</dbReference>
<dbReference type="GO" id="GO:0016149">
    <property type="term" value="F:translation release factor activity, codon specific"/>
    <property type="evidence" value="ECO:0007669"/>
    <property type="project" value="UniProtKB-UniRule"/>
</dbReference>
<dbReference type="GO" id="GO:0006449">
    <property type="term" value="P:regulation of translational termination"/>
    <property type="evidence" value="ECO:0007669"/>
    <property type="project" value="UniProtKB-UniRule"/>
</dbReference>
<dbReference type="CDD" id="cd04169">
    <property type="entry name" value="RF3"/>
    <property type="match status" value="1"/>
</dbReference>
<dbReference type="CDD" id="cd03689">
    <property type="entry name" value="RF3_II"/>
    <property type="match status" value="1"/>
</dbReference>
<dbReference type="CDD" id="cd16259">
    <property type="entry name" value="RF3_III"/>
    <property type="match status" value="1"/>
</dbReference>
<dbReference type="FunFam" id="3.30.70.3280:FF:000001">
    <property type="entry name" value="Peptide chain release factor 3"/>
    <property type="match status" value="1"/>
</dbReference>
<dbReference type="FunFam" id="3.40.50.300:FF:000542">
    <property type="entry name" value="Peptide chain release factor 3"/>
    <property type="match status" value="1"/>
</dbReference>
<dbReference type="Gene3D" id="3.40.50.300">
    <property type="entry name" value="P-loop containing nucleotide triphosphate hydrolases"/>
    <property type="match status" value="3"/>
</dbReference>
<dbReference type="Gene3D" id="3.30.70.3280">
    <property type="entry name" value="Peptide chain release factor 3, domain III"/>
    <property type="match status" value="1"/>
</dbReference>
<dbReference type="HAMAP" id="MF_00072">
    <property type="entry name" value="Rel_fac_3"/>
    <property type="match status" value="1"/>
</dbReference>
<dbReference type="InterPro" id="IPR053905">
    <property type="entry name" value="EF-G-like_DII"/>
</dbReference>
<dbReference type="InterPro" id="IPR035647">
    <property type="entry name" value="EFG_III/V"/>
</dbReference>
<dbReference type="InterPro" id="IPR031157">
    <property type="entry name" value="G_TR_CS"/>
</dbReference>
<dbReference type="InterPro" id="IPR027417">
    <property type="entry name" value="P-loop_NTPase"/>
</dbReference>
<dbReference type="InterPro" id="IPR004548">
    <property type="entry name" value="PrfC"/>
</dbReference>
<dbReference type="InterPro" id="IPR032090">
    <property type="entry name" value="RF3_C"/>
</dbReference>
<dbReference type="InterPro" id="IPR038467">
    <property type="entry name" value="RF3_dom_3_sf"/>
</dbReference>
<dbReference type="InterPro" id="IPR041732">
    <property type="entry name" value="RF3_GTP-bd"/>
</dbReference>
<dbReference type="InterPro" id="IPR005225">
    <property type="entry name" value="Small_GTP-bd"/>
</dbReference>
<dbReference type="InterPro" id="IPR000795">
    <property type="entry name" value="T_Tr_GTP-bd_dom"/>
</dbReference>
<dbReference type="InterPro" id="IPR009000">
    <property type="entry name" value="Transl_B-barrel_sf"/>
</dbReference>
<dbReference type="NCBIfam" id="TIGR00503">
    <property type="entry name" value="prfC"/>
    <property type="match status" value="1"/>
</dbReference>
<dbReference type="NCBIfam" id="NF001964">
    <property type="entry name" value="PRK00741.1"/>
    <property type="match status" value="1"/>
</dbReference>
<dbReference type="NCBIfam" id="TIGR00231">
    <property type="entry name" value="small_GTP"/>
    <property type="match status" value="1"/>
</dbReference>
<dbReference type="PANTHER" id="PTHR43556">
    <property type="entry name" value="PEPTIDE CHAIN RELEASE FACTOR RF3"/>
    <property type="match status" value="1"/>
</dbReference>
<dbReference type="PANTHER" id="PTHR43556:SF2">
    <property type="entry name" value="PEPTIDE CHAIN RELEASE FACTOR RF3"/>
    <property type="match status" value="1"/>
</dbReference>
<dbReference type="Pfam" id="PF22042">
    <property type="entry name" value="EF-G_D2"/>
    <property type="match status" value="1"/>
</dbReference>
<dbReference type="Pfam" id="PF00009">
    <property type="entry name" value="GTP_EFTU"/>
    <property type="match status" value="1"/>
</dbReference>
<dbReference type="Pfam" id="PF16658">
    <property type="entry name" value="RF3_C"/>
    <property type="match status" value="1"/>
</dbReference>
<dbReference type="PRINTS" id="PR00315">
    <property type="entry name" value="ELONGATNFCT"/>
</dbReference>
<dbReference type="SUPFAM" id="SSF54980">
    <property type="entry name" value="EF-G C-terminal domain-like"/>
    <property type="match status" value="1"/>
</dbReference>
<dbReference type="SUPFAM" id="SSF52540">
    <property type="entry name" value="P-loop containing nucleoside triphosphate hydrolases"/>
    <property type="match status" value="1"/>
</dbReference>
<dbReference type="SUPFAM" id="SSF50447">
    <property type="entry name" value="Translation proteins"/>
    <property type="match status" value="1"/>
</dbReference>
<dbReference type="PROSITE" id="PS00301">
    <property type="entry name" value="G_TR_1"/>
    <property type="match status" value="1"/>
</dbReference>
<dbReference type="PROSITE" id="PS51722">
    <property type="entry name" value="G_TR_2"/>
    <property type="match status" value="1"/>
</dbReference>
<sequence length="529" mass="59533">MSDKKLLEEIKKRRTFAIISHPDAGKTTITEKVLLFGRALQTAGTVKGKKSGQHAKSDWMEMEKERGISVTTSVMQFPYSDHLVNLLDTPGHEDFSEDTYRTLTAVDSCLMVIDAAKGVEDRTRKLMEVTRLRDTPIVTFMNKLDRDIRDPMELLDEVETELDILCAPITWPIGCGKSFKGVYHLHRDETILYQSGHGHTIQDVRIIKGLDNPELDTAVGSDLAETLRDELELVRGASNEFDQELFREGQLTPVFFGTALGNFGVDHMLDGLVEWAPAPLGRETEEGTIESTDGKFSGFVFKIQANMDPKHRDRIAFCRIVSGKYEKGMKMRNSRLGKDVRISDALTFLAGDRSLLEEAYAGDIIGLHNHGTIRIGDTFTSGDNYRFTGIPNFAPELFKRIRLKDPLKQKQLLKGLIQLSEEGAVQVFRPLANNDLIVGAVGVLQFDVVVARLKAEYNVDALYEHVNVATARWVYSSDEKKLDEFRRKGEQNLALDGGDNLTYIAPTMVNLQLAQERYPDIQFTNTREN</sequence>
<comment type="function">
    <text evidence="1">Increases the formation of ribosomal termination complexes and stimulates activities of RF-1 and RF-2. It binds guanine nucleotides and has strong preference for UGA stop codons. It may interact directly with the ribosome. The stimulation of RF-1 and RF-2 is significantly reduced by GTP and GDP, but not by GMP.</text>
</comment>
<comment type="subcellular location">
    <subcellularLocation>
        <location evidence="1">Cytoplasm</location>
    </subcellularLocation>
</comment>
<comment type="similarity">
    <text evidence="1">Belongs to the TRAFAC class translation factor GTPase superfamily. Classic translation factor GTPase family. PrfC subfamily.</text>
</comment>
<evidence type="ECO:0000255" key="1">
    <source>
        <dbReference type="HAMAP-Rule" id="MF_00072"/>
    </source>
</evidence>
<organism>
    <name type="scientific">Alteromonas mediterranea (strain DSM 17117 / CIP 110805 / LMG 28347 / Deep ecotype)</name>
    <dbReference type="NCBI Taxonomy" id="1774373"/>
    <lineage>
        <taxon>Bacteria</taxon>
        <taxon>Pseudomonadati</taxon>
        <taxon>Pseudomonadota</taxon>
        <taxon>Gammaproteobacteria</taxon>
        <taxon>Alteromonadales</taxon>
        <taxon>Alteromonadaceae</taxon>
        <taxon>Alteromonas/Salinimonas group</taxon>
        <taxon>Alteromonas</taxon>
    </lineage>
</organism>
<name>RF3_ALTMD</name>